<protein>
    <recommendedName>
        <fullName evidence="1">DNA mismatch repair protein MutL</fullName>
    </recommendedName>
</protein>
<gene>
    <name evidence="1" type="primary">mutL</name>
    <name type="ordered locus">BBta_1703</name>
</gene>
<keyword id="KW-0227">DNA damage</keyword>
<keyword id="KW-0234">DNA repair</keyword>
<keyword id="KW-1185">Reference proteome</keyword>
<organism>
    <name type="scientific">Bradyrhizobium sp. (strain BTAi1 / ATCC BAA-1182)</name>
    <dbReference type="NCBI Taxonomy" id="288000"/>
    <lineage>
        <taxon>Bacteria</taxon>
        <taxon>Pseudomonadati</taxon>
        <taxon>Pseudomonadota</taxon>
        <taxon>Alphaproteobacteria</taxon>
        <taxon>Hyphomicrobiales</taxon>
        <taxon>Nitrobacteraceae</taxon>
        <taxon>Bradyrhizobium</taxon>
    </lineage>
</organism>
<feature type="chain" id="PRO_1000009995" description="DNA mismatch repair protein MutL">
    <location>
        <begin position="1"/>
        <end position="618"/>
    </location>
</feature>
<sequence length="618" mass="66590">MPVRQLPEQIINRIAAGEVVERPASVVKELVENAIDAGASRIDIFTDGGGRRKIAITDDGGGMTAADLALAVERHATSKLDDEDLLQIRTLGFRGEALPSIGSVARLSITTRHKSEPHAWALQVDCGEKSPVVPAALNQGTRVEVADLFHATPARLKFLKTDRTEAEAIREVVRRLAMARPDIAFTIAGEERAPVTWAAALPGAPGQLTRLGDILGADFRSHAIAVQSARESVAVEGFAAAPALTRANALGQYLFVNGRPVRDKLILGAVRAAYADYLPRDRHPVVALFVTLDPREVDANVHPAKTEVRFRNAGLVRALIIHALKEGLAREGRRTAANDGGATIAAFRPAFAPPRPNPGPMNWDWQRSPSAPAAPVPRDHGADAMPAAAAFSPAAFAEPAQAAFDVGGPRADLRLHEQPAAPDLLDRPLGAARTQLHDTYIVAQTRDGLVIVDQHAAHERIVYERLKASLSAHGVQRQILLIPDIVELDEAIVEALLARTDELASFGLAIESFGPGAVAVRETPSLLGKINAAGLLRDLAEHMEEWGEALPLERRLMHVAATMACHGSVRAGRRLKPEEMNALLREMEETPNSGQCNHGRPTYVELKLADVEKLFGRR</sequence>
<dbReference type="EMBL" id="CP000494">
    <property type="protein sequence ID" value="ABQ33912.1"/>
    <property type="molecule type" value="Genomic_DNA"/>
</dbReference>
<dbReference type="RefSeq" id="WP_012041943.1">
    <property type="nucleotide sequence ID" value="NC_009485.1"/>
</dbReference>
<dbReference type="SMR" id="A5ECL8"/>
<dbReference type="STRING" id="288000.BBta_1703"/>
<dbReference type="KEGG" id="bbt:BBta_1703"/>
<dbReference type="eggNOG" id="COG0323">
    <property type="taxonomic scope" value="Bacteria"/>
</dbReference>
<dbReference type="HOGENOM" id="CLU_004131_4_2_5"/>
<dbReference type="OrthoDB" id="9763467at2"/>
<dbReference type="Proteomes" id="UP000000246">
    <property type="component" value="Chromosome"/>
</dbReference>
<dbReference type="GO" id="GO:0032300">
    <property type="term" value="C:mismatch repair complex"/>
    <property type="evidence" value="ECO:0007669"/>
    <property type="project" value="InterPro"/>
</dbReference>
<dbReference type="GO" id="GO:0005524">
    <property type="term" value="F:ATP binding"/>
    <property type="evidence" value="ECO:0007669"/>
    <property type="project" value="InterPro"/>
</dbReference>
<dbReference type="GO" id="GO:0016887">
    <property type="term" value="F:ATP hydrolysis activity"/>
    <property type="evidence" value="ECO:0007669"/>
    <property type="project" value="InterPro"/>
</dbReference>
<dbReference type="GO" id="GO:0140664">
    <property type="term" value="F:ATP-dependent DNA damage sensor activity"/>
    <property type="evidence" value="ECO:0007669"/>
    <property type="project" value="InterPro"/>
</dbReference>
<dbReference type="GO" id="GO:0030983">
    <property type="term" value="F:mismatched DNA binding"/>
    <property type="evidence" value="ECO:0007669"/>
    <property type="project" value="InterPro"/>
</dbReference>
<dbReference type="GO" id="GO:0006298">
    <property type="term" value="P:mismatch repair"/>
    <property type="evidence" value="ECO:0007669"/>
    <property type="project" value="UniProtKB-UniRule"/>
</dbReference>
<dbReference type="CDD" id="cd16926">
    <property type="entry name" value="HATPase_MutL-MLH-PMS-like"/>
    <property type="match status" value="1"/>
</dbReference>
<dbReference type="CDD" id="cd00782">
    <property type="entry name" value="MutL_Trans"/>
    <property type="match status" value="1"/>
</dbReference>
<dbReference type="FunFam" id="3.30.565.10:FF:000003">
    <property type="entry name" value="DNA mismatch repair endonuclease MutL"/>
    <property type="match status" value="1"/>
</dbReference>
<dbReference type="Gene3D" id="3.30.230.10">
    <property type="match status" value="1"/>
</dbReference>
<dbReference type="Gene3D" id="3.30.565.10">
    <property type="entry name" value="Histidine kinase-like ATPase, C-terminal domain"/>
    <property type="match status" value="1"/>
</dbReference>
<dbReference type="Gene3D" id="3.30.1540.20">
    <property type="entry name" value="MutL, C-terminal domain, dimerisation subdomain"/>
    <property type="match status" value="1"/>
</dbReference>
<dbReference type="Gene3D" id="3.30.1370.100">
    <property type="entry name" value="MutL, C-terminal domain, regulatory subdomain"/>
    <property type="match status" value="1"/>
</dbReference>
<dbReference type="HAMAP" id="MF_00149">
    <property type="entry name" value="DNA_mis_repair"/>
    <property type="match status" value="1"/>
</dbReference>
<dbReference type="InterPro" id="IPR014762">
    <property type="entry name" value="DNA_mismatch_repair_CS"/>
</dbReference>
<dbReference type="InterPro" id="IPR020667">
    <property type="entry name" value="DNA_mismatch_repair_MutL"/>
</dbReference>
<dbReference type="InterPro" id="IPR013507">
    <property type="entry name" value="DNA_mismatch_S5_2-like"/>
</dbReference>
<dbReference type="InterPro" id="IPR036890">
    <property type="entry name" value="HATPase_C_sf"/>
</dbReference>
<dbReference type="InterPro" id="IPR002099">
    <property type="entry name" value="MutL/Mlh/PMS"/>
</dbReference>
<dbReference type="InterPro" id="IPR038973">
    <property type="entry name" value="MutL/Mlh/Pms-like"/>
</dbReference>
<dbReference type="InterPro" id="IPR014790">
    <property type="entry name" value="MutL_C"/>
</dbReference>
<dbReference type="InterPro" id="IPR042120">
    <property type="entry name" value="MutL_C_dimsub"/>
</dbReference>
<dbReference type="InterPro" id="IPR042121">
    <property type="entry name" value="MutL_C_regsub"/>
</dbReference>
<dbReference type="InterPro" id="IPR037198">
    <property type="entry name" value="MutL_C_sf"/>
</dbReference>
<dbReference type="InterPro" id="IPR020568">
    <property type="entry name" value="Ribosomal_Su5_D2-typ_SF"/>
</dbReference>
<dbReference type="InterPro" id="IPR014721">
    <property type="entry name" value="Ribsml_uS5_D2-typ_fold_subgr"/>
</dbReference>
<dbReference type="NCBIfam" id="TIGR00585">
    <property type="entry name" value="mutl"/>
    <property type="match status" value="1"/>
</dbReference>
<dbReference type="NCBIfam" id="NF000953">
    <property type="entry name" value="PRK00095.2-4"/>
    <property type="match status" value="1"/>
</dbReference>
<dbReference type="PANTHER" id="PTHR10073">
    <property type="entry name" value="DNA MISMATCH REPAIR PROTEIN MLH, PMS, MUTL"/>
    <property type="match status" value="1"/>
</dbReference>
<dbReference type="PANTHER" id="PTHR10073:SF12">
    <property type="entry name" value="DNA MISMATCH REPAIR PROTEIN MLH1"/>
    <property type="match status" value="1"/>
</dbReference>
<dbReference type="Pfam" id="PF01119">
    <property type="entry name" value="DNA_mis_repair"/>
    <property type="match status" value="1"/>
</dbReference>
<dbReference type="Pfam" id="PF13589">
    <property type="entry name" value="HATPase_c_3"/>
    <property type="match status" value="1"/>
</dbReference>
<dbReference type="Pfam" id="PF08676">
    <property type="entry name" value="MutL_C"/>
    <property type="match status" value="1"/>
</dbReference>
<dbReference type="SMART" id="SM01340">
    <property type="entry name" value="DNA_mis_repair"/>
    <property type="match status" value="1"/>
</dbReference>
<dbReference type="SMART" id="SM00853">
    <property type="entry name" value="MutL_C"/>
    <property type="match status" value="1"/>
</dbReference>
<dbReference type="SUPFAM" id="SSF55874">
    <property type="entry name" value="ATPase domain of HSP90 chaperone/DNA topoisomerase II/histidine kinase"/>
    <property type="match status" value="1"/>
</dbReference>
<dbReference type="SUPFAM" id="SSF118116">
    <property type="entry name" value="DNA mismatch repair protein MutL"/>
    <property type="match status" value="1"/>
</dbReference>
<dbReference type="SUPFAM" id="SSF54211">
    <property type="entry name" value="Ribosomal protein S5 domain 2-like"/>
    <property type="match status" value="1"/>
</dbReference>
<dbReference type="PROSITE" id="PS00058">
    <property type="entry name" value="DNA_MISMATCH_REPAIR_1"/>
    <property type="match status" value="1"/>
</dbReference>
<comment type="function">
    <text evidence="1">This protein is involved in the repair of mismatches in DNA. It is required for dam-dependent methyl-directed DNA mismatch repair. May act as a 'molecular matchmaker', a protein that promotes the formation of a stable complex between two or more DNA-binding proteins in an ATP-dependent manner without itself being part of a final effector complex.</text>
</comment>
<comment type="similarity">
    <text evidence="1">Belongs to the DNA mismatch repair MutL/HexB family.</text>
</comment>
<proteinExistence type="inferred from homology"/>
<accession>A5ECL8</accession>
<name>MUTL_BRASB</name>
<reference key="1">
    <citation type="journal article" date="2007" name="Science">
        <title>Legumes symbioses: absence of nod genes in photosynthetic bradyrhizobia.</title>
        <authorList>
            <person name="Giraud E."/>
            <person name="Moulin L."/>
            <person name="Vallenet D."/>
            <person name="Barbe V."/>
            <person name="Cytryn E."/>
            <person name="Avarre J.-C."/>
            <person name="Jaubert M."/>
            <person name="Simon D."/>
            <person name="Cartieaux F."/>
            <person name="Prin Y."/>
            <person name="Bena G."/>
            <person name="Hannibal L."/>
            <person name="Fardoux J."/>
            <person name="Kojadinovic M."/>
            <person name="Vuillet L."/>
            <person name="Lajus A."/>
            <person name="Cruveiller S."/>
            <person name="Rouy Z."/>
            <person name="Mangenot S."/>
            <person name="Segurens B."/>
            <person name="Dossat C."/>
            <person name="Franck W.L."/>
            <person name="Chang W.-S."/>
            <person name="Saunders E."/>
            <person name="Bruce D."/>
            <person name="Richardson P."/>
            <person name="Normand P."/>
            <person name="Dreyfus B."/>
            <person name="Pignol D."/>
            <person name="Stacey G."/>
            <person name="Emerich D."/>
            <person name="Vermeglio A."/>
            <person name="Medigue C."/>
            <person name="Sadowsky M."/>
        </authorList>
    </citation>
    <scope>NUCLEOTIDE SEQUENCE [LARGE SCALE GENOMIC DNA]</scope>
    <source>
        <strain>BTAi1 / ATCC BAA-1182</strain>
    </source>
</reference>
<evidence type="ECO:0000255" key="1">
    <source>
        <dbReference type="HAMAP-Rule" id="MF_00149"/>
    </source>
</evidence>